<organism>
    <name type="scientific">Tityus stigmurus</name>
    <name type="common">Brazilian scorpion</name>
    <dbReference type="NCBI Taxonomy" id="50344"/>
    <lineage>
        <taxon>Eukaryota</taxon>
        <taxon>Metazoa</taxon>
        <taxon>Ecdysozoa</taxon>
        <taxon>Arthropoda</taxon>
        <taxon>Chelicerata</taxon>
        <taxon>Arachnida</taxon>
        <taxon>Scorpiones</taxon>
        <taxon>Buthida</taxon>
        <taxon>Buthoidea</taxon>
        <taxon>Buthidae</taxon>
        <taxon>Tityus</taxon>
    </lineage>
</organism>
<name>KAX47_TITST</name>
<comment type="function">
    <text evidence="2">Potently blocks Kv1.1/KCNA1 (85%), Kv1.2/KCNA2 (91%), Kv1.3/KCNA3 (89%), Kv1.6/KCNA6 (94%), and Shaker (97%).</text>
</comment>
<comment type="subcellular location">
    <subcellularLocation>
        <location evidence="4">Secreted</location>
    </subcellularLocation>
</comment>
<comment type="tissue specificity">
    <text evidence="7">Expressed by the venom gland.</text>
</comment>
<comment type="domain">
    <text evidence="2">Has the structural arrangement of an alpha-helix connected to a beta-sheet by disulfide bonds (CSalpha/beta).</text>
</comment>
<comment type="mass spectrometry" mass="1311.29" method="Electrospray" evidence="4"/>
<comment type="miscellaneous">
    <text evidence="2">Negative results: inhibits with low efficiency Kv1.5/KCNA5, Kv2.1/KCNB1, Kv7.1/KCNQ1 and ERG/KCNH2. Does not inhibit Kv1.4/KCNA4, Kv3.1/KCNC1, Kv7.2/KCNQ2 and ERG1/Kv11.1/KCNH2.</text>
</comment>
<comment type="miscellaneous">
    <text evidence="7">Unexpectandly, the 3D-structure model presents a toxin with only two disulfide bonds instead of the three normally found in this toxin family.</text>
</comment>
<comment type="similarity">
    <text evidence="6">Belongs to the short scorpion toxin superfamily. Potassium channel inhibitor family. Alpha-KTx 04 subfamily.</text>
</comment>
<protein>
    <recommendedName>
        <fullName evidence="6">Potassium channel toxin alpha-KTx 4.7</fullName>
    </recommendedName>
    <alternativeName>
        <fullName evidence="5">T.sigmurus alpha-KTx</fullName>
    </alternativeName>
</protein>
<feature type="signal peptide" evidence="3">
    <location>
        <begin position="1"/>
        <end position="22"/>
    </location>
</feature>
<feature type="peptide" id="PRO_0000446448" description="Potassium channel toxin alpha-KTx 4.7" evidence="2">
    <location>
        <begin position="23"/>
        <end position="59"/>
    </location>
</feature>
<feature type="region of interest" description="Interaction with Ca(2+)-activated K(+) channels" evidence="3">
    <location>
        <begin position="48"/>
        <end position="55"/>
    </location>
</feature>
<feature type="site" description="Basic residue of the functional dyad" evidence="1">
    <location>
        <position position="49"/>
    </location>
</feature>
<feature type="site" description="Aromatic residue of the functional dyad" evidence="1">
    <location>
        <position position="58"/>
    </location>
</feature>
<feature type="disulfide bond" evidence="2">
    <location>
        <begin position="29"/>
        <end position="50"/>
    </location>
</feature>
<feature type="disulfide bond" evidence="2">
    <location>
        <begin position="35"/>
        <end position="55"/>
    </location>
</feature>
<feature type="disulfide bond" evidence="2">
    <location>
        <begin position="39"/>
        <end position="57"/>
    </location>
</feature>
<accession>P0DPT4</accession>
<sequence length="59" mass="6488">MKAFYGILIIFILISMLDLSQQVFINAKCRGSPECLPKCKEAIGKAAGKCMNGKCKCYP</sequence>
<keyword id="KW-1015">Disulfide bond</keyword>
<keyword id="KW-0872">Ion channel impairing toxin</keyword>
<keyword id="KW-0528">Neurotoxin</keyword>
<keyword id="KW-0632">Potassium channel impairing toxin</keyword>
<keyword id="KW-0964">Secreted</keyword>
<keyword id="KW-0732">Signal</keyword>
<keyword id="KW-0800">Toxin</keyword>
<keyword id="KW-1220">Voltage-gated potassium channel impairing toxin</keyword>
<dbReference type="SMR" id="P0DPT4"/>
<dbReference type="GO" id="GO:0005576">
    <property type="term" value="C:extracellular region"/>
    <property type="evidence" value="ECO:0007669"/>
    <property type="project" value="UniProtKB-SubCell"/>
</dbReference>
<dbReference type="GO" id="GO:0008200">
    <property type="term" value="F:ion channel inhibitor activity"/>
    <property type="evidence" value="ECO:0007669"/>
    <property type="project" value="InterPro"/>
</dbReference>
<dbReference type="GO" id="GO:0015459">
    <property type="term" value="F:potassium channel regulator activity"/>
    <property type="evidence" value="ECO:0007669"/>
    <property type="project" value="UniProtKB-KW"/>
</dbReference>
<dbReference type="GO" id="GO:0090729">
    <property type="term" value="F:toxin activity"/>
    <property type="evidence" value="ECO:0007669"/>
    <property type="project" value="UniProtKB-KW"/>
</dbReference>
<dbReference type="FunFam" id="3.30.30.10:FF:000009">
    <property type="entry name" value="Potassium channel toxin alpha-KTx 4.3"/>
    <property type="match status" value="1"/>
</dbReference>
<dbReference type="Gene3D" id="3.30.30.10">
    <property type="entry name" value="Knottin, scorpion toxin-like"/>
    <property type="match status" value="1"/>
</dbReference>
<dbReference type="InterPro" id="IPR036574">
    <property type="entry name" value="Scorpion_toxin-like_sf"/>
</dbReference>
<dbReference type="InterPro" id="IPR001947">
    <property type="entry name" value="Scorpion_toxinS_K_inh"/>
</dbReference>
<dbReference type="Pfam" id="PF00451">
    <property type="entry name" value="Toxin_2"/>
    <property type="match status" value="1"/>
</dbReference>
<dbReference type="PRINTS" id="PR00286">
    <property type="entry name" value="CHARYBDTOXIN"/>
</dbReference>
<dbReference type="SUPFAM" id="SSF57095">
    <property type="entry name" value="Scorpion toxin-like"/>
    <property type="match status" value="1"/>
</dbReference>
<dbReference type="PROSITE" id="PS01138">
    <property type="entry name" value="SCORP_SHORT_TOXIN"/>
    <property type="match status" value="1"/>
</dbReference>
<reference key="1">
    <citation type="journal article" date="2019" name="J. Mol. Graph. Model.">
        <title>Molecular basis of Tityus stigmurus alpha toxin and potassium channel kV1.2 interactions.</title>
        <authorList>
            <person name="Freire M.C.L.C."/>
            <person name="Silva de Menezes Y.A."/>
            <person name="Ferreira Ferraz M.V."/>
            <person name="Bezerra da Cruz C.H."/>
            <person name="De Santis Ferreira L."/>
            <person name="de Freitas Fernandes-Pedrosa M."/>
            <person name="Barbosa E.G."/>
        </authorList>
    </citation>
    <scope>NUCLEOTIDE SEQUENCE [MRNA]</scope>
    <scope>IDENTIFICATION BY MASS SPECTROMETRY</scope>
    <scope>SUBCELLULAR LOCATION</scope>
    <scope>3D-STRUCTURE MODELING OF THE TOXIN IN COMPLEX WITH POTASSIUM CHANNEL KV1.2</scope>
    <source>
        <tissue>Venom</tissue>
        <tissue>Venom gland</tissue>
    </source>
</reference>
<evidence type="ECO:0000250" key="1">
    <source>
        <dbReference type="UniProtKB" id="O46028"/>
    </source>
</evidence>
<evidence type="ECO:0000250" key="2">
    <source>
        <dbReference type="UniProtKB" id="P46114"/>
    </source>
</evidence>
<evidence type="ECO:0000255" key="3"/>
<evidence type="ECO:0000269" key="4">
    <source>
    </source>
</evidence>
<evidence type="ECO:0000303" key="5">
    <source>
    </source>
</evidence>
<evidence type="ECO:0000305" key="6"/>
<evidence type="ECO:0000305" key="7">
    <source>
    </source>
</evidence>
<proteinExistence type="evidence at protein level"/>